<feature type="chain" id="PRO_0000199143" description="C-phycocyanin beta subunit">
    <location>
        <begin position="1"/>
        <end position="45" status="greater than"/>
    </location>
</feature>
<feature type="non-terminal residue">
    <location>
        <position position="45"/>
    </location>
</feature>
<proteinExistence type="evidence at protein level"/>
<gene>
    <name type="primary">cpcB</name>
</gene>
<name>PHCB_LIMFS</name>
<organism>
    <name type="scientific">Limnospira fusiformis</name>
    <name type="common">Arthrospira fusiformis</name>
    <dbReference type="NCBI Taxonomy" id="54297"/>
    <lineage>
        <taxon>Bacteria</taxon>
        <taxon>Bacillati</taxon>
        <taxon>Cyanobacteriota</taxon>
        <taxon>Cyanophyceae</taxon>
        <taxon>Oscillatoriophycideae</taxon>
        <taxon>Oscillatoriales</taxon>
        <taxon>Sirenicapillariaceae</taxon>
        <taxon>Limnospira</taxon>
    </lineage>
</organism>
<dbReference type="SMR" id="P84341"/>
<dbReference type="GO" id="GO:0030089">
    <property type="term" value="C:phycobilisome"/>
    <property type="evidence" value="ECO:0007669"/>
    <property type="project" value="UniProtKB-KW"/>
</dbReference>
<dbReference type="GO" id="GO:0031676">
    <property type="term" value="C:plasma membrane-derived thylakoid membrane"/>
    <property type="evidence" value="ECO:0007669"/>
    <property type="project" value="UniProtKB-SubCell"/>
</dbReference>
<dbReference type="GO" id="GO:0015979">
    <property type="term" value="P:photosynthesis"/>
    <property type="evidence" value="ECO:0007669"/>
    <property type="project" value="UniProtKB-KW"/>
</dbReference>
<dbReference type="Gene3D" id="1.10.490.20">
    <property type="entry name" value="Phycocyanins"/>
    <property type="match status" value="1"/>
</dbReference>
<dbReference type="InterPro" id="IPR009050">
    <property type="entry name" value="Globin-like_sf"/>
</dbReference>
<dbReference type="InterPro" id="IPR038719">
    <property type="entry name" value="Phycobilisome_asu/bsu_sf"/>
</dbReference>
<dbReference type="SUPFAM" id="SSF46458">
    <property type="entry name" value="Globin-like"/>
    <property type="match status" value="1"/>
</dbReference>
<keyword id="KW-0042">Antenna complex</keyword>
<keyword id="KW-0089">Bile pigment</keyword>
<keyword id="KW-0157">Chromophore</keyword>
<keyword id="KW-0903">Direct protein sequencing</keyword>
<keyword id="KW-0249">Electron transport</keyword>
<keyword id="KW-0472">Membrane</keyword>
<keyword id="KW-0602">Photosynthesis</keyword>
<keyword id="KW-0605">Phycobilisome</keyword>
<keyword id="KW-0793">Thylakoid</keyword>
<keyword id="KW-0813">Transport</keyword>
<accession>P84341</accession>
<reference evidence="5" key="1">
    <citation type="submission" date="2004-12" db="UniProtKB">
        <title>Purification and characterization of c-phycocyanin beta unit from Spirulina fusiformis.</title>
        <authorList>
            <person name="Harishkumar M."/>
            <person name="Radha K.S."/>
            <person name="Sugiki M."/>
            <person name="Omura S."/>
            <person name="Maruyama M."/>
        </authorList>
    </citation>
    <scope>PROTEIN SEQUENCE</scope>
    <scope>SUBCELLULAR LOCATION</scope>
</reference>
<reference evidence="5" key="2">
    <citation type="journal article" date="2006" name="Phytomedicine">
        <title>Purification of c-phycocyanin from Spirulina fusiformis and its effect on the induction of urokinase-type plasminogen activator from calf pulmonary endothelial cells.</title>
        <authorList>
            <person name="Madhyastha H.K."/>
            <person name="Radha K.S."/>
            <person name="Sugiki M."/>
            <person name="Omura S."/>
            <person name="Maruyama M."/>
        </authorList>
    </citation>
    <scope>PROTEIN SEQUENCE</scope>
    <scope>SUBUNIT</scope>
    <scope>INDUCTION OF A PLASMINOGEN ACTIVATOR IN MAMMALIAN CELL CULTURE</scope>
</reference>
<protein>
    <recommendedName>
        <fullName>C-phycocyanin beta subunit</fullName>
    </recommendedName>
</protein>
<sequence length="45" mass="4960">MFDAFTLVVSQADTRGEMLSTAQIDALSQMVAESNKYLDAVNYIT</sequence>
<comment type="function">
    <text evidence="5">Light-harvesting photosynthetic bile pigment-protein from the phycobiliprotein complex (phycobilisome, PBS). Phycocyanin is the major phycobiliprotein in the PBS rod.</text>
</comment>
<comment type="subunit">
    <text evidence="1 3">Heterodimer of an alpha and a beta subunit (PubMed:16920511). The hererodimer further assembles into trimers and the trimers into hexamers (By similarity).</text>
</comment>
<comment type="subcellular location">
    <subcellularLocation>
        <location evidence="4">Cellular thylakoid membrane</location>
        <topology evidence="4">Peripheral membrane protein</topology>
        <orientation evidence="4">Cytoplasmic side</orientation>
    </subcellularLocation>
    <text>Part of the phycobilisome rod.</text>
</comment>
<comment type="PTM">
    <text evidence="1">Contains two covalently linked bilin chromophores.</text>
</comment>
<comment type="miscellaneous">
    <text evidence="3">Spirulina fusiformis, is used as a source of protein and vitamin supplement in drinks.</text>
</comment>
<comment type="miscellaneous">
    <text evidence="3">In cell culture induces a urokinase-type plasminogen activator; may therefore be useful in dissolving blood clots.</text>
</comment>
<comment type="similarity">
    <text evidence="2">Belongs to the phycobiliprotein family.</text>
</comment>
<evidence type="ECO:0000250" key="1">
    <source>
        <dbReference type="UniProtKB" id="P06539"/>
    </source>
</evidence>
<evidence type="ECO:0000255" key="2"/>
<evidence type="ECO:0000269" key="3">
    <source>
    </source>
</evidence>
<evidence type="ECO:0000269" key="4">
    <source ref="1"/>
</evidence>
<evidence type="ECO:0000305" key="5"/>